<feature type="chain" id="PRO_0000060962" description="Cytochrome b">
    <location>
        <begin position="1"/>
        <end position="370"/>
    </location>
</feature>
<feature type="transmembrane region" description="Helical" evidence="2">
    <location>
        <begin position="25"/>
        <end position="45"/>
    </location>
</feature>
<feature type="transmembrane region" description="Helical" evidence="2">
    <location>
        <begin position="69"/>
        <end position="90"/>
    </location>
</feature>
<feature type="transmembrane region" description="Helical" evidence="2">
    <location>
        <begin position="105"/>
        <end position="125"/>
    </location>
</feature>
<feature type="transmembrane region" description="Helical" evidence="2">
    <location>
        <begin position="170"/>
        <end position="190"/>
    </location>
</feature>
<feature type="transmembrane region" description="Helical" evidence="2">
    <location>
        <begin position="218"/>
        <end position="238"/>
    </location>
</feature>
<feature type="transmembrane region" description="Helical" evidence="2">
    <location>
        <begin position="280"/>
        <end position="300"/>
    </location>
</feature>
<feature type="transmembrane region" description="Helical" evidence="2">
    <location>
        <begin position="312"/>
        <end position="332"/>
    </location>
</feature>
<feature type="transmembrane region" description="Helical" evidence="2">
    <location>
        <begin position="339"/>
        <end position="358"/>
    </location>
</feature>
<feature type="binding site" description="axial binding residue" evidence="2">
    <location>
        <position position="75"/>
    </location>
    <ligand>
        <name>heme b</name>
        <dbReference type="ChEBI" id="CHEBI:60344"/>
        <label>b562</label>
    </ligand>
    <ligandPart>
        <name>Fe</name>
        <dbReference type="ChEBI" id="CHEBI:18248"/>
    </ligandPart>
</feature>
<feature type="binding site" description="axial binding residue" evidence="2">
    <location>
        <position position="89"/>
    </location>
    <ligand>
        <name>heme b</name>
        <dbReference type="ChEBI" id="CHEBI:60344"/>
        <label>b566</label>
    </ligand>
    <ligandPart>
        <name>Fe</name>
        <dbReference type="ChEBI" id="CHEBI:18248"/>
    </ligandPart>
</feature>
<feature type="binding site" description="axial binding residue" evidence="2">
    <location>
        <position position="174"/>
    </location>
    <ligand>
        <name>heme b</name>
        <dbReference type="ChEBI" id="CHEBI:60344"/>
        <label>b562</label>
    </ligand>
    <ligandPart>
        <name>Fe</name>
        <dbReference type="ChEBI" id="CHEBI:18248"/>
    </ligandPart>
</feature>
<feature type="binding site" description="axial binding residue" evidence="2">
    <location>
        <position position="188"/>
    </location>
    <ligand>
        <name>heme b</name>
        <dbReference type="ChEBI" id="CHEBI:60344"/>
        <label>b566</label>
    </ligand>
    <ligandPart>
        <name>Fe</name>
        <dbReference type="ChEBI" id="CHEBI:18248"/>
    </ligandPart>
</feature>
<feature type="binding site" evidence="2">
    <location>
        <position position="193"/>
    </location>
    <ligand>
        <name>a ubiquinone</name>
        <dbReference type="ChEBI" id="CHEBI:16389"/>
    </ligand>
</feature>
<sequence>MPHQQILMLFGLLPVATNISTWWNFGSMLLACSTLQVLTGFFLAVHYTANINLAFSSIIHITRDVPYGWLMQNLHAIGASMFFICIYIHIARGLYYGSYLNKETWLSGTMLLIMLMATAFFGYVLPWGQMSFWAATVITNLLTAIPYLGNTMTTWLWGGFAINDPTLTRFFALHFILPFGIISLSSLHVILLHEEGSSNPLGTNPDIDKIPFHPYHTYKDLLMLTIMTILLLLIVSFSPDIFNDPDNFSKANPLVTPQHIKPEWYFLFAYGILRSIPNKLGGALALTMSIIILMTVPFTHTSKMRSMMFRPFMQMTFWMFAATFLVITWTATKPVEQPFTLIGQMASMLYFLFFISNPIMGWLENKIMKT</sequence>
<evidence type="ECO:0000250" key="1"/>
<evidence type="ECO:0000250" key="2">
    <source>
        <dbReference type="UniProtKB" id="P00157"/>
    </source>
</evidence>
<evidence type="ECO:0000255" key="3">
    <source>
        <dbReference type="PROSITE-ProRule" id="PRU00967"/>
    </source>
</evidence>
<evidence type="ECO:0000255" key="4">
    <source>
        <dbReference type="PROSITE-ProRule" id="PRU00968"/>
    </source>
</evidence>
<keyword id="KW-0249">Electron transport</keyword>
<keyword id="KW-0349">Heme</keyword>
<keyword id="KW-0408">Iron</keyword>
<keyword id="KW-0472">Membrane</keyword>
<keyword id="KW-0479">Metal-binding</keyword>
<keyword id="KW-0496">Mitochondrion</keyword>
<keyword id="KW-0999">Mitochondrion inner membrane</keyword>
<keyword id="KW-0679">Respiratory chain</keyword>
<keyword id="KW-0812">Transmembrane</keyword>
<keyword id="KW-1133">Transmembrane helix</keyword>
<keyword id="KW-0813">Transport</keyword>
<keyword id="KW-0830">Ubiquinone</keyword>
<dbReference type="EMBL" id="U69808">
    <property type="protein sequence ID" value="AAC01839.1"/>
    <property type="molecule type" value="Genomic_DNA"/>
</dbReference>
<dbReference type="SMR" id="O48063"/>
<dbReference type="GO" id="GO:0005743">
    <property type="term" value="C:mitochondrial inner membrane"/>
    <property type="evidence" value="ECO:0007669"/>
    <property type="project" value="UniProtKB-SubCell"/>
</dbReference>
<dbReference type="GO" id="GO:0045275">
    <property type="term" value="C:respiratory chain complex III"/>
    <property type="evidence" value="ECO:0007669"/>
    <property type="project" value="InterPro"/>
</dbReference>
<dbReference type="GO" id="GO:0046872">
    <property type="term" value="F:metal ion binding"/>
    <property type="evidence" value="ECO:0007669"/>
    <property type="project" value="UniProtKB-KW"/>
</dbReference>
<dbReference type="GO" id="GO:0008121">
    <property type="term" value="F:ubiquinol-cytochrome-c reductase activity"/>
    <property type="evidence" value="ECO:0007669"/>
    <property type="project" value="InterPro"/>
</dbReference>
<dbReference type="GO" id="GO:0006122">
    <property type="term" value="P:mitochondrial electron transport, ubiquinol to cytochrome c"/>
    <property type="evidence" value="ECO:0007669"/>
    <property type="project" value="TreeGrafter"/>
</dbReference>
<dbReference type="CDD" id="cd00290">
    <property type="entry name" value="cytochrome_b_C"/>
    <property type="match status" value="1"/>
</dbReference>
<dbReference type="CDD" id="cd00284">
    <property type="entry name" value="Cytochrome_b_N"/>
    <property type="match status" value="1"/>
</dbReference>
<dbReference type="Gene3D" id="1.20.810.10">
    <property type="entry name" value="Cytochrome Bc1 Complex, Chain C"/>
    <property type="match status" value="1"/>
</dbReference>
<dbReference type="InterPro" id="IPR005798">
    <property type="entry name" value="Cyt_b/b6_C"/>
</dbReference>
<dbReference type="InterPro" id="IPR036150">
    <property type="entry name" value="Cyt_b/b6_C_sf"/>
</dbReference>
<dbReference type="InterPro" id="IPR005797">
    <property type="entry name" value="Cyt_b/b6_N"/>
</dbReference>
<dbReference type="InterPro" id="IPR027387">
    <property type="entry name" value="Cytb/b6-like_sf"/>
</dbReference>
<dbReference type="InterPro" id="IPR030689">
    <property type="entry name" value="Cytochrome_b"/>
</dbReference>
<dbReference type="InterPro" id="IPR048260">
    <property type="entry name" value="Cytochrome_b_C_euk/bac"/>
</dbReference>
<dbReference type="InterPro" id="IPR048259">
    <property type="entry name" value="Cytochrome_b_N_euk/bac"/>
</dbReference>
<dbReference type="InterPro" id="IPR016174">
    <property type="entry name" value="Di-haem_cyt_TM"/>
</dbReference>
<dbReference type="PANTHER" id="PTHR19271">
    <property type="entry name" value="CYTOCHROME B"/>
    <property type="match status" value="1"/>
</dbReference>
<dbReference type="PANTHER" id="PTHR19271:SF16">
    <property type="entry name" value="CYTOCHROME B"/>
    <property type="match status" value="1"/>
</dbReference>
<dbReference type="Pfam" id="PF00032">
    <property type="entry name" value="Cytochrom_B_C"/>
    <property type="match status" value="1"/>
</dbReference>
<dbReference type="Pfam" id="PF00033">
    <property type="entry name" value="Cytochrome_B"/>
    <property type="match status" value="1"/>
</dbReference>
<dbReference type="PIRSF" id="PIRSF038885">
    <property type="entry name" value="COB"/>
    <property type="match status" value="1"/>
</dbReference>
<dbReference type="SUPFAM" id="SSF81648">
    <property type="entry name" value="a domain/subunit of cytochrome bc1 complex (Ubiquinol-cytochrome c reductase)"/>
    <property type="match status" value="1"/>
</dbReference>
<dbReference type="SUPFAM" id="SSF81342">
    <property type="entry name" value="Transmembrane di-heme cytochromes"/>
    <property type="match status" value="1"/>
</dbReference>
<dbReference type="PROSITE" id="PS51003">
    <property type="entry name" value="CYTB_CTER"/>
    <property type="match status" value="1"/>
</dbReference>
<dbReference type="PROSITE" id="PS51002">
    <property type="entry name" value="CYTB_NTER"/>
    <property type="match status" value="1"/>
</dbReference>
<gene>
    <name type="primary">MT-CYB</name>
    <name type="synonym">COB</name>
    <name type="synonym">CYTB</name>
    <name type="synonym">MTCYB</name>
</gene>
<accession>O48063</accession>
<geneLocation type="mitochondrion"/>
<reference key="1">
    <citation type="thesis" date="1997" institute="Queen's University / Kingston" country="Canada">
        <title>Hic Sunt Serpentes -- molecular phylogenetics and the Boidae (Serpentes: Booidea).</title>
        <authorList>
            <person name="Campbell B.N."/>
        </authorList>
    </citation>
    <scope>NUCLEOTIDE SEQUENCE [GENOMIC DNA]</scope>
</reference>
<name>CYB_EUNMU</name>
<comment type="function">
    <text evidence="2">Component of the ubiquinol-cytochrome c reductase complex (complex III or cytochrome b-c1 complex) that is part of the mitochondrial respiratory chain. The b-c1 complex mediates electron transfer from ubiquinol to cytochrome c. Contributes to the generation of a proton gradient across the mitochondrial membrane that is then used for ATP synthesis.</text>
</comment>
<comment type="cofactor">
    <cofactor evidence="2">
        <name>heme b</name>
        <dbReference type="ChEBI" id="CHEBI:60344"/>
    </cofactor>
    <text evidence="2">Binds 2 heme b groups non-covalently.</text>
</comment>
<comment type="subunit">
    <text evidence="2">The cytochrome bc1 complex contains 3 respiratory subunits (MT-CYB, CYC1 and UQCRFS1), 2 core proteins (UQCRC1 and UQCRC2) and probably 6 low-molecular weight proteins.</text>
</comment>
<comment type="subcellular location">
    <subcellularLocation>
        <location evidence="2">Mitochondrion inner membrane</location>
        <topology evidence="2">Multi-pass membrane protein</topology>
    </subcellularLocation>
</comment>
<comment type="miscellaneous">
    <text evidence="1">Heme 1 (or BL or b562) is low-potential and absorbs at about 562 nm, and heme 2 (or BH or b566) is high-potential and absorbs at about 566 nm.</text>
</comment>
<comment type="similarity">
    <text evidence="3 4">Belongs to the cytochrome b family.</text>
</comment>
<comment type="caution">
    <text evidence="2">The full-length protein contains only eight transmembrane helices, not nine as predicted by bioinformatics tools.</text>
</comment>
<protein>
    <recommendedName>
        <fullName>Cytochrome b</fullName>
    </recommendedName>
    <alternativeName>
        <fullName>Complex III subunit 3</fullName>
    </alternativeName>
    <alternativeName>
        <fullName>Complex III subunit III</fullName>
    </alternativeName>
    <alternativeName>
        <fullName>Cytochrome b-c1 complex subunit 3</fullName>
    </alternativeName>
    <alternativeName>
        <fullName>Ubiquinol-cytochrome-c reductase complex cytochrome b subunit</fullName>
    </alternativeName>
</protein>
<organism>
    <name type="scientific">Eunectes murinus</name>
    <name type="common">Green anaconda</name>
    <dbReference type="NCBI Taxonomy" id="51876"/>
    <lineage>
        <taxon>Eukaryota</taxon>
        <taxon>Metazoa</taxon>
        <taxon>Chordata</taxon>
        <taxon>Craniata</taxon>
        <taxon>Vertebrata</taxon>
        <taxon>Euteleostomi</taxon>
        <taxon>Lepidosauria</taxon>
        <taxon>Squamata</taxon>
        <taxon>Bifurcata</taxon>
        <taxon>Unidentata</taxon>
        <taxon>Episquamata</taxon>
        <taxon>Toxicofera</taxon>
        <taxon>Serpentes</taxon>
        <taxon>Henophidia</taxon>
        <taxon>Boidae</taxon>
        <taxon>Boinae</taxon>
        <taxon>Eunectes</taxon>
    </lineage>
</organism>
<proteinExistence type="inferred from homology"/>